<accession>Q5WVQ0</accession>
<reference key="1">
    <citation type="journal article" date="2004" name="Nat. Genet.">
        <title>Evidence in the Legionella pneumophila genome for exploitation of host cell functions and high genome plasticity.</title>
        <authorList>
            <person name="Cazalet C."/>
            <person name="Rusniok C."/>
            <person name="Brueggemann H."/>
            <person name="Zidane N."/>
            <person name="Magnier A."/>
            <person name="Ma L."/>
            <person name="Tichit M."/>
            <person name="Jarraud S."/>
            <person name="Bouchier C."/>
            <person name="Vandenesch F."/>
            <person name="Kunst F."/>
            <person name="Etienne J."/>
            <person name="Glaser P."/>
            <person name="Buchrieser C."/>
        </authorList>
    </citation>
    <scope>NUCLEOTIDE SEQUENCE [LARGE SCALE GENOMIC DNA]</scope>
    <source>
        <strain>Lens</strain>
    </source>
</reference>
<sequence>MEENKQKALSAALSQIERQFGKGSVMRMGDSTVSRDIEAISTGSLGLDIALGIGGLPKGRIVEIYGPESSGKTTLTLQVIAECQKMGGTAAFIDAEHALDPSYAQKLGVKVDELLVSQPDTGEQALEITDMLVRSAAVDVVIIDSVAALTPKAEIEGEMGDSHVGLQARLMSQALRKLTANIKRSNTLVIFINQIRMKIGVMFGSPETTTGGNALKFYASVRLDIRRIGSIKKGEEILGSETRVKVVKNKVAPPFKMTEFDILYNEGISRESEIINLGVQLNLIEKSGAWYSYKQEKIGQGKENVRLYLKENPQVAAELEQQIRTELLEKKLSVLASASEDLFETIDD</sequence>
<gene>
    <name evidence="1" type="primary">recA</name>
    <name type="ordered locus">lpl1765</name>
</gene>
<evidence type="ECO:0000255" key="1">
    <source>
        <dbReference type="HAMAP-Rule" id="MF_00268"/>
    </source>
</evidence>
<protein>
    <recommendedName>
        <fullName evidence="1">Protein RecA</fullName>
    </recommendedName>
    <alternativeName>
        <fullName evidence="1">Recombinase A</fullName>
    </alternativeName>
</protein>
<proteinExistence type="inferred from homology"/>
<dbReference type="EMBL" id="CR628337">
    <property type="protein sequence ID" value="CAH16004.1"/>
    <property type="molecule type" value="Genomic_DNA"/>
</dbReference>
<dbReference type="RefSeq" id="WP_011215774.1">
    <property type="nucleotide sequence ID" value="NC_006369.1"/>
</dbReference>
<dbReference type="SMR" id="Q5WVQ0"/>
<dbReference type="KEGG" id="lpf:lpl1765"/>
<dbReference type="LegioList" id="lpl1765"/>
<dbReference type="HOGENOM" id="CLU_040469_3_2_6"/>
<dbReference type="Proteomes" id="UP000002517">
    <property type="component" value="Chromosome"/>
</dbReference>
<dbReference type="GO" id="GO:0005829">
    <property type="term" value="C:cytosol"/>
    <property type="evidence" value="ECO:0007669"/>
    <property type="project" value="TreeGrafter"/>
</dbReference>
<dbReference type="GO" id="GO:0005524">
    <property type="term" value="F:ATP binding"/>
    <property type="evidence" value="ECO:0007669"/>
    <property type="project" value="UniProtKB-UniRule"/>
</dbReference>
<dbReference type="GO" id="GO:0016887">
    <property type="term" value="F:ATP hydrolysis activity"/>
    <property type="evidence" value="ECO:0007669"/>
    <property type="project" value="InterPro"/>
</dbReference>
<dbReference type="GO" id="GO:0140664">
    <property type="term" value="F:ATP-dependent DNA damage sensor activity"/>
    <property type="evidence" value="ECO:0007669"/>
    <property type="project" value="InterPro"/>
</dbReference>
<dbReference type="GO" id="GO:0003684">
    <property type="term" value="F:damaged DNA binding"/>
    <property type="evidence" value="ECO:0007669"/>
    <property type="project" value="UniProtKB-UniRule"/>
</dbReference>
<dbReference type="GO" id="GO:0003697">
    <property type="term" value="F:single-stranded DNA binding"/>
    <property type="evidence" value="ECO:0007669"/>
    <property type="project" value="UniProtKB-UniRule"/>
</dbReference>
<dbReference type="GO" id="GO:0006310">
    <property type="term" value="P:DNA recombination"/>
    <property type="evidence" value="ECO:0007669"/>
    <property type="project" value="UniProtKB-UniRule"/>
</dbReference>
<dbReference type="GO" id="GO:0006281">
    <property type="term" value="P:DNA repair"/>
    <property type="evidence" value="ECO:0007669"/>
    <property type="project" value="UniProtKB-UniRule"/>
</dbReference>
<dbReference type="GO" id="GO:0009432">
    <property type="term" value="P:SOS response"/>
    <property type="evidence" value="ECO:0007669"/>
    <property type="project" value="UniProtKB-UniRule"/>
</dbReference>
<dbReference type="CDD" id="cd00983">
    <property type="entry name" value="RecA"/>
    <property type="match status" value="1"/>
</dbReference>
<dbReference type="FunFam" id="3.40.50.300:FF:000087">
    <property type="entry name" value="Recombinase RecA"/>
    <property type="match status" value="1"/>
</dbReference>
<dbReference type="Gene3D" id="3.40.50.300">
    <property type="entry name" value="P-loop containing nucleotide triphosphate hydrolases"/>
    <property type="match status" value="1"/>
</dbReference>
<dbReference type="HAMAP" id="MF_00268">
    <property type="entry name" value="RecA"/>
    <property type="match status" value="1"/>
</dbReference>
<dbReference type="InterPro" id="IPR003593">
    <property type="entry name" value="AAA+_ATPase"/>
</dbReference>
<dbReference type="InterPro" id="IPR013765">
    <property type="entry name" value="DNA_recomb/repair_RecA"/>
</dbReference>
<dbReference type="InterPro" id="IPR020584">
    <property type="entry name" value="DNA_recomb/repair_RecA_CS"/>
</dbReference>
<dbReference type="InterPro" id="IPR027417">
    <property type="entry name" value="P-loop_NTPase"/>
</dbReference>
<dbReference type="InterPro" id="IPR049261">
    <property type="entry name" value="RecA-like_C"/>
</dbReference>
<dbReference type="InterPro" id="IPR049428">
    <property type="entry name" value="RecA-like_N"/>
</dbReference>
<dbReference type="InterPro" id="IPR020588">
    <property type="entry name" value="RecA_ATP-bd"/>
</dbReference>
<dbReference type="InterPro" id="IPR023400">
    <property type="entry name" value="RecA_C_sf"/>
</dbReference>
<dbReference type="InterPro" id="IPR020587">
    <property type="entry name" value="RecA_monomer-monomer_interface"/>
</dbReference>
<dbReference type="NCBIfam" id="TIGR02012">
    <property type="entry name" value="tigrfam_recA"/>
    <property type="match status" value="1"/>
</dbReference>
<dbReference type="PANTHER" id="PTHR45900:SF1">
    <property type="entry name" value="MITOCHONDRIAL DNA REPAIR PROTEIN RECA HOMOLOG-RELATED"/>
    <property type="match status" value="1"/>
</dbReference>
<dbReference type="PANTHER" id="PTHR45900">
    <property type="entry name" value="RECA"/>
    <property type="match status" value="1"/>
</dbReference>
<dbReference type="Pfam" id="PF00154">
    <property type="entry name" value="RecA"/>
    <property type="match status" value="1"/>
</dbReference>
<dbReference type="Pfam" id="PF21096">
    <property type="entry name" value="RecA_C"/>
    <property type="match status" value="1"/>
</dbReference>
<dbReference type="PRINTS" id="PR00142">
    <property type="entry name" value="RECA"/>
</dbReference>
<dbReference type="SMART" id="SM00382">
    <property type="entry name" value="AAA"/>
    <property type="match status" value="1"/>
</dbReference>
<dbReference type="SUPFAM" id="SSF52540">
    <property type="entry name" value="P-loop containing nucleoside triphosphate hydrolases"/>
    <property type="match status" value="1"/>
</dbReference>
<dbReference type="SUPFAM" id="SSF54752">
    <property type="entry name" value="RecA protein, C-terminal domain"/>
    <property type="match status" value="1"/>
</dbReference>
<dbReference type="PROSITE" id="PS00321">
    <property type="entry name" value="RECA_1"/>
    <property type="match status" value="1"/>
</dbReference>
<dbReference type="PROSITE" id="PS50162">
    <property type="entry name" value="RECA_2"/>
    <property type="match status" value="1"/>
</dbReference>
<dbReference type="PROSITE" id="PS50163">
    <property type="entry name" value="RECA_3"/>
    <property type="match status" value="1"/>
</dbReference>
<name>RECA_LEGPL</name>
<feature type="chain" id="PRO_0000122739" description="Protein RecA">
    <location>
        <begin position="1"/>
        <end position="348"/>
    </location>
</feature>
<feature type="binding site" evidence="1">
    <location>
        <begin position="66"/>
        <end position="73"/>
    </location>
    <ligand>
        <name>ATP</name>
        <dbReference type="ChEBI" id="CHEBI:30616"/>
    </ligand>
</feature>
<comment type="function">
    <text evidence="1">Can catalyze the hydrolysis of ATP in the presence of single-stranded DNA, the ATP-dependent uptake of single-stranded DNA by duplex DNA, and the ATP-dependent hybridization of homologous single-stranded DNAs. It interacts with LexA causing its activation and leading to its autocatalytic cleavage.</text>
</comment>
<comment type="subcellular location">
    <subcellularLocation>
        <location evidence="1">Cytoplasm</location>
    </subcellularLocation>
</comment>
<comment type="similarity">
    <text evidence="1">Belongs to the RecA family.</text>
</comment>
<organism>
    <name type="scientific">Legionella pneumophila (strain Lens)</name>
    <dbReference type="NCBI Taxonomy" id="297245"/>
    <lineage>
        <taxon>Bacteria</taxon>
        <taxon>Pseudomonadati</taxon>
        <taxon>Pseudomonadota</taxon>
        <taxon>Gammaproteobacteria</taxon>
        <taxon>Legionellales</taxon>
        <taxon>Legionellaceae</taxon>
        <taxon>Legionella</taxon>
    </lineage>
</organism>
<keyword id="KW-0067">ATP-binding</keyword>
<keyword id="KW-0963">Cytoplasm</keyword>
<keyword id="KW-0227">DNA damage</keyword>
<keyword id="KW-0233">DNA recombination</keyword>
<keyword id="KW-0234">DNA repair</keyword>
<keyword id="KW-0238">DNA-binding</keyword>
<keyword id="KW-0547">Nucleotide-binding</keyword>
<keyword id="KW-0742">SOS response</keyword>